<sequence length="222" mass="26742">MRKDVKIYLNHILESIELIEEYTKDKTEDDFFTSKFLQDAVIRRIEIIGEAIKNLPMEFREKYNHIPWKEFAEMRDILIRKYFGVDLGLTWEVVKKDIPKLKEEILKIMEELDKNKNNKYNVFAYGELMKKERLLELINRVPKMIEGRVYGYEKFFDETIGYYGARKKEGSYIDGIILLDITDKELGIFDDYEDLDVYYIREKTTAVSEDGRKYDVYIYLRK</sequence>
<feature type="chain" id="PRO_0000158262" description="Gamma-glutamylcyclotransferase and putative RNase MJ0434">
    <location>
        <begin position="1"/>
        <end position="222"/>
    </location>
</feature>
<feature type="short sequence motif" description="RX(4)HXY motif" evidence="1">
    <location>
        <begin position="75"/>
        <end position="82"/>
    </location>
</feature>
<feature type="active site" evidence="1">
    <location>
        <position position="75"/>
    </location>
</feature>
<feature type="modified residue" description="O-di-AMP-tyrosine" evidence="1">
    <location>
        <position position="82"/>
    </location>
</feature>
<organism>
    <name type="scientific">Methanocaldococcus jannaschii (strain ATCC 43067 / DSM 2661 / JAL-1 / JCM 10045 / NBRC 100440)</name>
    <name type="common">Methanococcus jannaschii</name>
    <dbReference type="NCBI Taxonomy" id="243232"/>
    <lineage>
        <taxon>Archaea</taxon>
        <taxon>Methanobacteriati</taxon>
        <taxon>Methanobacteriota</taxon>
        <taxon>Methanomada group</taxon>
        <taxon>Methanococci</taxon>
        <taxon>Methanococcales</taxon>
        <taxon>Methanocaldococcaceae</taxon>
        <taxon>Methanocaldococcus</taxon>
    </lineage>
</organism>
<evidence type="ECO:0000250" key="1">
    <source>
        <dbReference type="UniProtKB" id="A0A0B0QJR1"/>
    </source>
</evidence>
<evidence type="ECO:0000250" key="2">
    <source>
        <dbReference type="UniProtKB" id="Q8ECH6"/>
    </source>
</evidence>
<evidence type="ECO:0000305" key="3"/>
<gene>
    <name type="ordered locus">MJ0434</name>
</gene>
<dbReference type="EC" id="3.1.-.-" evidence="2"/>
<dbReference type="EMBL" id="L77117">
    <property type="protein sequence ID" value="AAB98422.1"/>
    <property type="molecule type" value="Genomic_DNA"/>
</dbReference>
<dbReference type="PIR" id="B64354">
    <property type="entry name" value="B64354"/>
</dbReference>
<dbReference type="SMR" id="Q57876"/>
<dbReference type="STRING" id="243232.MJ_0434"/>
<dbReference type="PaxDb" id="243232-MJ_0434"/>
<dbReference type="EnsemblBacteria" id="AAB98422">
    <property type="protein sequence ID" value="AAB98422"/>
    <property type="gene ID" value="MJ_0434"/>
</dbReference>
<dbReference type="KEGG" id="mja:MJ_0434"/>
<dbReference type="eggNOG" id="arCOG05024">
    <property type="taxonomic scope" value="Archaea"/>
</dbReference>
<dbReference type="eggNOG" id="arCOG05099">
    <property type="taxonomic scope" value="Archaea"/>
</dbReference>
<dbReference type="HOGENOM" id="CLU_1243026_0_0_2"/>
<dbReference type="InParanoid" id="Q57876"/>
<dbReference type="Proteomes" id="UP000000805">
    <property type="component" value="Chromosome"/>
</dbReference>
<dbReference type="GO" id="GO:0110001">
    <property type="term" value="C:toxin-antitoxin complex"/>
    <property type="evidence" value="ECO:0007669"/>
    <property type="project" value="InterPro"/>
</dbReference>
<dbReference type="GO" id="GO:0000166">
    <property type="term" value="F:nucleotide binding"/>
    <property type="evidence" value="ECO:0007669"/>
    <property type="project" value="UniProtKB-KW"/>
</dbReference>
<dbReference type="GO" id="GO:0004540">
    <property type="term" value="F:RNA nuclease activity"/>
    <property type="evidence" value="ECO:0007669"/>
    <property type="project" value="InterPro"/>
</dbReference>
<dbReference type="CDD" id="cd06661">
    <property type="entry name" value="GGCT_like"/>
    <property type="match status" value="1"/>
</dbReference>
<dbReference type="Gene3D" id="3.10.490.10">
    <property type="entry name" value="Gamma-glutamyl cyclotransferase-like"/>
    <property type="match status" value="1"/>
</dbReference>
<dbReference type="InterPro" id="IPR009288">
    <property type="entry name" value="AIG2-like_dom"/>
</dbReference>
<dbReference type="InterPro" id="IPR013024">
    <property type="entry name" value="GGCT-like"/>
</dbReference>
<dbReference type="InterPro" id="IPR036568">
    <property type="entry name" value="GGCT-like_sf"/>
</dbReference>
<dbReference type="InterPro" id="IPR008201">
    <property type="entry name" value="HepT-like"/>
</dbReference>
<dbReference type="InterPro" id="IPR051813">
    <property type="entry name" value="HepT_RNase_toxin"/>
</dbReference>
<dbReference type="PANTHER" id="PTHR34139:SF1">
    <property type="entry name" value="RNASE MJ1380-RELATED"/>
    <property type="match status" value="1"/>
</dbReference>
<dbReference type="PANTHER" id="PTHR34139">
    <property type="entry name" value="UPF0331 PROTEIN MJ0127"/>
    <property type="match status" value="1"/>
</dbReference>
<dbReference type="Pfam" id="PF06094">
    <property type="entry name" value="GGACT"/>
    <property type="match status" value="1"/>
</dbReference>
<dbReference type="Pfam" id="PF01934">
    <property type="entry name" value="HepT-like"/>
    <property type="match status" value="1"/>
</dbReference>
<dbReference type="SUPFAM" id="SSF110857">
    <property type="entry name" value="Gamma-glutamyl cyclotransferase-like"/>
    <property type="match status" value="1"/>
</dbReference>
<protein>
    <recommendedName>
        <fullName>Gamma-glutamylcyclotransferase and putative RNase MJ0434</fullName>
    </recommendedName>
    <domain>
        <recommendedName>
            <fullName>Gamma-glutamylcyclotransferase family protein MJ0434</fullName>
        </recommendedName>
    </domain>
    <domain>
        <recommendedName>
            <fullName>Putative RNase MJ0434</fullName>
            <ecNumber evidence="2">3.1.-.-</ecNumber>
        </recommendedName>
        <alternativeName>
            <fullName>Putative toxin MJ0434</fullName>
        </alternativeName>
    </domain>
</protein>
<proteinExistence type="inferred from homology"/>
<comment type="function">
    <text evidence="2">Probable toxic component of a putative type VII toxin-antitoxin (TA) system, probably an RNase. Probably neutralized by cognate antitoxin MJ0435. Neutralization may be due to AMPylation by MJ0435.</text>
</comment>
<comment type="subunit">
    <text evidence="2">Homodimer, probably forms a complex with cognate antitoxin MJ0435.</text>
</comment>
<comment type="PTM">
    <text evidence="1">Modified by cognate antitoxin MJ0435; probably at least 2 successive AMPylation events occur on Tyr-82.</text>
</comment>
<comment type="similarity">
    <text evidence="3">In the N-terminal section; belongs to the HepT RNase toxin family.</text>
</comment>
<comment type="similarity">
    <text evidence="3">In the C-terminal section; belongs to the gamma-glutamylcyclotransferase family.</text>
</comment>
<accession>Q57876</accession>
<name>Y434_METJA</name>
<reference key="1">
    <citation type="journal article" date="1996" name="Science">
        <title>Complete genome sequence of the methanogenic archaeon, Methanococcus jannaschii.</title>
        <authorList>
            <person name="Bult C.J."/>
            <person name="White O."/>
            <person name="Olsen G.J."/>
            <person name="Zhou L."/>
            <person name="Fleischmann R.D."/>
            <person name="Sutton G.G."/>
            <person name="Blake J.A."/>
            <person name="FitzGerald L.M."/>
            <person name="Clayton R.A."/>
            <person name="Gocayne J.D."/>
            <person name="Kerlavage A.R."/>
            <person name="Dougherty B.A."/>
            <person name="Tomb J.-F."/>
            <person name="Adams M.D."/>
            <person name="Reich C.I."/>
            <person name="Overbeek R."/>
            <person name="Kirkness E.F."/>
            <person name="Weinstock K.G."/>
            <person name="Merrick J.M."/>
            <person name="Glodek A."/>
            <person name="Scott J.L."/>
            <person name="Geoghagen N.S.M."/>
            <person name="Weidman J.F."/>
            <person name="Fuhrmann J.L."/>
            <person name="Nguyen D."/>
            <person name="Utterback T.R."/>
            <person name="Kelley J.M."/>
            <person name="Peterson J.D."/>
            <person name="Sadow P.W."/>
            <person name="Hanna M.C."/>
            <person name="Cotton M.D."/>
            <person name="Roberts K.M."/>
            <person name="Hurst M.A."/>
            <person name="Kaine B.P."/>
            <person name="Borodovsky M."/>
            <person name="Klenk H.-P."/>
            <person name="Fraser C.M."/>
            <person name="Smith H.O."/>
            <person name="Woese C.R."/>
            <person name="Venter J.C."/>
        </authorList>
    </citation>
    <scope>NUCLEOTIDE SEQUENCE [LARGE SCALE GENOMIC DNA]</scope>
    <source>
        <strain>ATCC 43067 / DSM 2661 / JAL-1 / JCM 10045 / NBRC 100440</strain>
    </source>
</reference>
<keyword id="KW-0378">Hydrolase</keyword>
<keyword id="KW-0540">Nuclease</keyword>
<keyword id="KW-0547">Nucleotide-binding</keyword>
<keyword id="KW-0597">Phosphoprotein</keyword>
<keyword id="KW-1185">Reference proteome</keyword>
<keyword id="KW-1277">Toxin-antitoxin system</keyword>